<name>ACSA_CUPMC</name>
<gene>
    <name evidence="1" type="primary">acsA</name>
    <name type="ordered locus">Rmet_2270</name>
</gene>
<protein>
    <recommendedName>
        <fullName evidence="1">Acetyl-coenzyme A synthetase</fullName>
        <shortName evidence="1">AcCoA synthetase</shortName>
        <shortName evidence="1">Acs</shortName>
        <ecNumber evidence="1">6.2.1.1</ecNumber>
    </recommendedName>
    <alternativeName>
        <fullName evidence="1">Acetate--CoA ligase</fullName>
    </alternativeName>
    <alternativeName>
        <fullName evidence="1">Acyl-activating enzyme</fullName>
    </alternativeName>
</protein>
<comment type="function">
    <text evidence="1">Catalyzes the conversion of acetate into acetyl-CoA (AcCoA), an essential intermediate at the junction of anabolic and catabolic pathways. AcsA undergoes a two-step reaction. In the first half reaction, AcsA combines acetate with ATP to form acetyl-adenylate (AcAMP) intermediate. In the second half reaction, it can then transfer the acetyl group from AcAMP to the sulfhydryl group of CoA, forming the product AcCoA.</text>
</comment>
<comment type="catalytic activity">
    <reaction evidence="1">
        <text>acetate + ATP + CoA = acetyl-CoA + AMP + diphosphate</text>
        <dbReference type="Rhea" id="RHEA:23176"/>
        <dbReference type="ChEBI" id="CHEBI:30089"/>
        <dbReference type="ChEBI" id="CHEBI:30616"/>
        <dbReference type="ChEBI" id="CHEBI:33019"/>
        <dbReference type="ChEBI" id="CHEBI:57287"/>
        <dbReference type="ChEBI" id="CHEBI:57288"/>
        <dbReference type="ChEBI" id="CHEBI:456215"/>
        <dbReference type="EC" id="6.2.1.1"/>
    </reaction>
</comment>
<comment type="cofactor">
    <cofactor evidence="1">
        <name>Mg(2+)</name>
        <dbReference type="ChEBI" id="CHEBI:18420"/>
    </cofactor>
</comment>
<comment type="PTM">
    <text evidence="1">Acetylated. Deacetylation by the SIR2-homolog deacetylase activates the enzyme.</text>
</comment>
<comment type="similarity">
    <text evidence="1">Belongs to the ATP-dependent AMP-binding enzyme family.</text>
</comment>
<proteinExistence type="inferred from homology"/>
<reference key="1">
    <citation type="journal article" date="2010" name="PLoS ONE">
        <title>The complete genome sequence of Cupriavidus metallidurans strain CH34, a master survivalist in harsh and anthropogenic environments.</title>
        <authorList>
            <person name="Janssen P.J."/>
            <person name="Van Houdt R."/>
            <person name="Moors H."/>
            <person name="Monsieurs P."/>
            <person name="Morin N."/>
            <person name="Michaux A."/>
            <person name="Benotmane M.A."/>
            <person name="Leys N."/>
            <person name="Vallaeys T."/>
            <person name="Lapidus A."/>
            <person name="Monchy S."/>
            <person name="Medigue C."/>
            <person name="Taghavi S."/>
            <person name="McCorkle S."/>
            <person name="Dunn J."/>
            <person name="van der Lelie D."/>
            <person name="Mergeay M."/>
        </authorList>
    </citation>
    <scope>NUCLEOTIDE SEQUENCE [LARGE SCALE GENOMIC DNA]</scope>
    <source>
        <strain>ATCC 43123 / DSM 2839 / NBRC 102507 / CH34</strain>
    </source>
</reference>
<keyword id="KW-0007">Acetylation</keyword>
<keyword id="KW-0067">ATP-binding</keyword>
<keyword id="KW-0436">Ligase</keyword>
<keyword id="KW-0460">Magnesium</keyword>
<keyword id="KW-0479">Metal-binding</keyword>
<keyword id="KW-0547">Nucleotide-binding</keyword>
<keyword id="KW-1185">Reference proteome</keyword>
<sequence>MSAIESVMQEHRVFNPPASFAKTAAIPSMEAYQALCDEAAKDYEGFWARHARELLHWHKPFTKVLDESNAPFYKWFEDGEINASYNCLDRNVEKGLGDKTAIVFEADDGTVTRVSYQELLAKVSRFANGMKALGIKKGDRVVIYMPMSVEGVVAMQACARIGATHSVVFGGFSAKSLQERLVDVGAVALITADEQMRGGKALPLKAIADEALTLGGCEAVKNVIVYRRTGGNVAWTEGRDRSMEDVAAGQSDNCPAEPVGAEHPLFVLYTSGSTGKPKGVQHSTGGYLLWALMTMRWTFDIKPDDMFWCTADIGWVTGHTYITYGPLAAGATQIVFEGVPTFPNAGRFWDMIQRHKVSIFYTAPTAIRSLIKAAEADEKIHPKQYDLSSLRLLGTVGEPINPEAWMWYYKNIGRERCPIVDTFWQTETGGHMITPLPGATPLVPGSCTLPLPGIMAAIVDETGQDVPNGNGGILVVKRPWPSMIRTIWGDPERFKKSYYPEELGGKLYLAGDGSIRDKETGYFTIMGRIDDVLNVSGHRMGTMEIESALVSNPIVAEAAVVGRPDDTTGEAICAFVVLKRSRPTAEEAVKIAAELRNWVGKEIGPIAKPKDIRFGDNLPKTRSGKIMRRLLRSLAKGEDITQDTSTLENPAILDQLKQAQ</sequence>
<feature type="chain" id="PRO_1000065309" description="Acetyl-coenzyme A synthetase">
    <location>
        <begin position="1"/>
        <end position="660"/>
    </location>
</feature>
<feature type="binding site" evidence="1">
    <location>
        <begin position="197"/>
        <end position="200"/>
    </location>
    <ligand>
        <name>CoA</name>
        <dbReference type="ChEBI" id="CHEBI:57287"/>
    </ligand>
</feature>
<feature type="binding site" evidence="1">
    <location>
        <position position="317"/>
    </location>
    <ligand>
        <name>CoA</name>
        <dbReference type="ChEBI" id="CHEBI:57287"/>
    </ligand>
</feature>
<feature type="binding site" evidence="1">
    <location>
        <begin position="397"/>
        <end position="399"/>
    </location>
    <ligand>
        <name>ATP</name>
        <dbReference type="ChEBI" id="CHEBI:30616"/>
    </ligand>
</feature>
<feature type="binding site" evidence="1">
    <location>
        <begin position="421"/>
        <end position="426"/>
    </location>
    <ligand>
        <name>ATP</name>
        <dbReference type="ChEBI" id="CHEBI:30616"/>
    </ligand>
</feature>
<feature type="binding site" evidence="1">
    <location>
        <position position="512"/>
    </location>
    <ligand>
        <name>ATP</name>
        <dbReference type="ChEBI" id="CHEBI:30616"/>
    </ligand>
</feature>
<feature type="binding site" evidence="1">
    <location>
        <position position="528"/>
    </location>
    <ligand>
        <name>ATP</name>
        <dbReference type="ChEBI" id="CHEBI:30616"/>
    </ligand>
</feature>
<feature type="binding site" evidence="1">
    <location>
        <position position="536"/>
    </location>
    <ligand>
        <name>CoA</name>
        <dbReference type="ChEBI" id="CHEBI:57287"/>
    </ligand>
</feature>
<feature type="binding site" evidence="1">
    <location>
        <position position="539"/>
    </location>
    <ligand>
        <name>ATP</name>
        <dbReference type="ChEBI" id="CHEBI:30616"/>
    </ligand>
</feature>
<feature type="binding site" evidence="1">
    <location>
        <position position="550"/>
    </location>
    <ligand>
        <name>Mg(2+)</name>
        <dbReference type="ChEBI" id="CHEBI:18420"/>
    </ligand>
</feature>
<feature type="binding site" evidence="1">
    <location>
        <position position="555"/>
    </location>
    <ligand>
        <name>Mg(2+)</name>
        <dbReference type="ChEBI" id="CHEBI:18420"/>
    </ligand>
</feature>
<feature type="modified residue" description="N6-acetyllysine" evidence="1">
    <location>
        <position position="625"/>
    </location>
</feature>
<accession>Q1LL27</accession>
<organism>
    <name type="scientific">Cupriavidus metallidurans (strain ATCC 43123 / DSM 2839 / NBRC 102507 / CH34)</name>
    <name type="common">Ralstonia metallidurans</name>
    <dbReference type="NCBI Taxonomy" id="266264"/>
    <lineage>
        <taxon>Bacteria</taxon>
        <taxon>Pseudomonadati</taxon>
        <taxon>Pseudomonadota</taxon>
        <taxon>Betaproteobacteria</taxon>
        <taxon>Burkholderiales</taxon>
        <taxon>Burkholderiaceae</taxon>
        <taxon>Cupriavidus</taxon>
    </lineage>
</organism>
<evidence type="ECO:0000255" key="1">
    <source>
        <dbReference type="HAMAP-Rule" id="MF_01123"/>
    </source>
</evidence>
<dbReference type="EC" id="6.2.1.1" evidence="1"/>
<dbReference type="EMBL" id="CP000352">
    <property type="protein sequence ID" value="ABF09149.1"/>
    <property type="molecule type" value="Genomic_DNA"/>
</dbReference>
<dbReference type="SMR" id="Q1LL27"/>
<dbReference type="STRING" id="266264.Rmet_2270"/>
<dbReference type="KEGG" id="rme:Rmet_2270"/>
<dbReference type="eggNOG" id="COG0365">
    <property type="taxonomic scope" value="Bacteria"/>
</dbReference>
<dbReference type="HOGENOM" id="CLU_000022_3_6_4"/>
<dbReference type="Proteomes" id="UP000002429">
    <property type="component" value="Chromosome"/>
</dbReference>
<dbReference type="GO" id="GO:0005829">
    <property type="term" value="C:cytosol"/>
    <property type="evidence" value="ECO:0007669"/>
    <property type="project" value="TreeGrafter"/>
</dbReference>
<dbReference type="GO" id="GO:0003987">
    <property type="term" value="F:acetate-CoA ligase activity"/>
    <property type="evidence" value="ECO:0007669"/>
    <property type="project" value="UniProtKB-UniRule"/>
</dbReference>
<dbReference type="GO" id="GO:0016208">
    <property type="term" value="F:AMP binding"/>
    <property type="evidence" value="ECO:0007669"/>
    <property type="project" value="InterPro"/>
</dbReference>
<dbReference type="GO" id="GO:0005524">
    <property type="term" value="F:ATP binding"/>
    <property type="evidence" value="ECO:0007669"/>
    <property type="project" value="UniProtKB-KW"/>
</dbReference>
<dbReference type="GO" id="GO:0046872">
    <property type="term" value="F:metal ion binding"/>
    <property type="evidence" value="ECO:0007669"/>
    <property type="project" value="UniProtKB-KW"/>
</dbReference>
<dbReference type="GO" id="GO:0019427">
    <property type="term" value="P:acetyl-CoA biosynthetic process from acetate"/>
    <property type="evidence" value="ECO:0007669"/>
    <property type="project" value="InterPro"/>
</dbReference>
<dbReference type="CDD" id="cd05966">
    <property type="entry name" value="ACS"/>
    <property type="match status" value="1"/>
</dbReference>
<dbReference type="FunFam" id="3.40.50.12780:FF:000001">
    <property type="entry name" value="Acetyl-coenzyme A synthetase"/>
    <property type="match status" value="1"/>
</dbReference>
<dbReference type="Gene3D" id="3.30.300.30">
    <property type="match status" value="1"/>
</dbReference>
<dbReference type="Gene3D" id="3.40.50.12780">
    <property type="entry name" value="N-terminal domain of ligase-like"/>
    <property type="match status" value="1"/>
</dbReference>
<dbReference type="HAMAP" id="MF_01123">
    <property type="entry name" value="Ac_CoA_synth"/>
    <property type="match status" value="1"/>
</dbReference>
<dbReference type="InterPro" id="IPR011904">
    <property type="entry name" value="Ac_CoA_lig"/>
</dbReference>
<dbReference type="InterPro" id="IPR032387">
    <property type="entry name" value="ACAS_N"/>
</dbReference>
<dbReference type="InterPro" id="IPR025110">
    <property type="entry name" value="AMP-bd_C"/>
</dbReference>
<dbReference type="InterPro" id="IPR045851">
    <property type="entry name" value="AMP-bd_C_sf"/>
</dbReference>
<dbReference type="InterPro" id="IPR020845">
    <property type="entry name" value="AMP-binding_CS"/>
</dbReference>
<dbReference type="InterPro" id="IPR000873">
    <property type="entry name" value="AMP-dep_synth/lig_dom"/>
</dbReference>
<dbReference type="InterPro" id="IPR042099">
    <property type="entry name" value="ANL_N_sf"/>
</dbReference>
<dbReference type="NCBIfam" id="TIGR02188">
    <property type="entry name" value="Ac_CoA_lig_AcsA"/>
    <property type="match status" value="1"/>
</dbReference>
<dbReference type="NCBIfam" id="NF001208">
    <property type="entry name" value="PRK00174.1"/>
    <property type="match status" value="1"/>
</dbReference>
<dbReference type="PANTHER" id="PTHR24095">
    <property type="entry name" value="ACETYL-COENZYME A SYNTHETASE"/>
    <property type="match status" value="1"/>
</dbReference>
<dbReference type="PANTHER" id="PTHR24095:SF14">
    <property type="entry name" value="ACETYL-COENZYME A SYNTHETASE 1"/>
    <property type="match status" value="1"/>
</dbReference>
<dbReference type="Pfam" id="PF16177">
    <property type="entry name" value="ACAS_N"/>
    <property type="match status" value="1"/>
</dbReference>
<dbReference type="Pfam" id="PF00501">
    <property type="entry name" value="AMP-binding"/>
    <property type="match status" value="1"/>
</dbReference>
<dbReference type="Pfam" id="PF13193">
    <property type="entry name" value="AMP-binding_C"/>
    <property type="match status" value="1"/>
</dbReference>
<dbReference type="SUPFAM" id="SSF56801">
    <property type="entry name" value="Acetyl-CoA synthetase-like"/>
    <property type="match status" value="1"/>
</dbReference>
<dbReference type="PROSITE" id="PS00455">
    <property type="entry name" value="AMP_BINDING"/>
    <property type="match status" value="1"/>
</dbReference>